<comment type="similarity">
    <text evidence="1">Belongs to the elongation factor P family.</text>
</comment>
<comment type="sequence caution" evidence="1">
    <conflict type="erroneous initiation">
        <sequence resource="EMBL-CDS" id="AAN81162"/>
    </conflict>
</comment>
<feature type="chain" id="PRO_0000094380" description="Elongation factor P-like protein">
    <location>
        <begin position="1"/>
        <end position="190"/>
    </location>
</feature>
<name>EFPL_ECOL6</name>
<accession>P0A6N9</accession>
<accession>P33028</accession>
<accession>Q8XE90</accession>
<evidence type="ECO:0000305" key="1"/>
<protein>
    <recommendedName>
        <fullName>Elongation factor P-like protein</fullName>
    </recommendedName>
</protein>
<organism>
    <name type="scientific">Escherichia coli O6:H1 (strain CFT073 / ATCC 700928 / UPEC)</name>
    <dbReference type="NCBI Taxonomy" id="199310"/>
    <lineage>
        <taxon>Bacteria</taxon>
        <taxon>Pseudomonadati</taxon>
        <taxon>Pseudomonadota</taxon>
        <taxon>Gammaproteobacteria</taxon>
        <taxon>Enterobacterales</taxon>
        <taxon>Enterobacteriaceae</taxon>
        <taxon>Escherichia</taxon>
    </lineage>
</organism>
<proteinExistence type="inferred from homology"/>
<sequence length="190" mass="21533">MPRANEIKKGMVLNYNGKLLLVKDIDIQSPTARGAATLYKMRFSDVRTGLKVEERFKGDDIVDTVTLTRRYVDFSYVDGNEYVFMDKEDYTPYTFTKDQIEEELLFMPEGGMPDMQVLTWDGQLLALELPQTVDLEIVETAPGIKGASASARNKPATLSTGLVIQVPEYLSPGEKIRIHIEERRYMGRAD</sequence>
<gene>
    <name type="primary">yeiP</name>
    <name type="ordered locus">c2708</name>
</gene>
<keyword id="KW-1185">Reference proteome</keyword>
<dbReference type="EMBL" id="AE014075">
    <property type="protein sequence ID" value="AAN81162.1"/>
    <property type="status" value="ALT_INIT"/>
    <property type="molecule type" value="Genomic_DNA"/>
</dbReference>
<dbReference type="RefSeq" id="WP_001136827.1">
    <property type="nucleotide sequence ID" value="NZ_CP051263.1"/>
</dbReference>
<dbReference type="SMR" id="P0A6N9"/>
<dbReference type="STRING" id="199310.c2708"/>
<dbReference type="GeneID" id="93775010"/>
<dbReference type="KEGG" id="ecc:c2708"/>
<dbReference type="eggNOG" id="COG0231">
    <property type="taxonomic scope" value="Bacteria"/>
</dbReference>
<dbReference type="HOGENOM" id="CLU_074944_2_0_6"/>
<dbReference type="Proteomes" id="UP000001410">
    <property type="component" value="Chromosome"/>
</dbReference>
<dbReference type="GO" id="GO:0005829">
    <property type="term" value="C:cytosol"/>
    <property type="evidence" value="ECO:0007669"/>
    <property type="project" value="UniProtKB-ARBA"/>
</dbReference>
<dbReference type="GO" id="GO:0003746">
    <property type="term" value="F:translation elongation factor activity"/>
    <property type="evidence" value="ECO:0007669"/>
    <property type="project" value="UniProtKB-UniRule"/>
</dbReference>
<dbReference type="GO" id="GO:0043043">
    <property type="term" value="P:peptide biosynthetic process"/>
    <property type="evidence" value="ECO:0007669"/>
    <property type="project" value="InterPro"/>
</dbReference>
<dbReference type="CDD" id="cd04470">
    <property type="entry name" value="S1_EF-P_repeat_1"/>
    <property type="match status" value="1"/>
</dbReference>
<dbReference type="CDD" id="cd05794">
    <property type="entry name" value="S1_EF-P_repeat_2"/>
    <property type="match status" value="1"/>
</dbReference>
<dbReference type="FunFam" id="2.40.50.140:FF:000004">
    <property type="entry name" value="Elongation factor P"/>
    <property type="match status" value="1"/>
</dbReference>
<dbReference type="FunFam" id="2.30.30.30:FF:000011">
    <property type="entry name" value="Elongation factor P-like protein"/>
    <property type="match status" value="1"/>
</dbReference>
<dbReference type="FunFam" id="2.40.50.140:FF:000053">
    <property type="entry name" value="Elongation factor P-like protein"/>
    <property type="match status" value="1"/>
</dbReference>
<dbReference type="Gene3D" id="2.30.30.30">
    <property type="match status" value="1"/>
</dbReference>
<dbReference type="Gene3D" id="2.40.50.140">
    <property type="entry name" value="Nucleic acid-binding proteins"/>
    <property type="match status" value="2"/>
</dbReference>
<dbReference type="HAMAP" id="MF_00646">
    <property type="entry name" value="EFP"/>
    <property type="match status" value="1"/>
</dbReference>
<dbReference type="InterPro" id="IPR015365">
    <property type="entry name" value="Elong-fact-P_C"/>
</dbReference>
<dbReference type="InterPro" id="IPR012340">
    <property type="entry name" value="NA-bd_OB-fold"/>
</dbReference>
<dbReference type="InterPro" id="IPR014722">
    <property type="entry name" value="Rib_uL2_dom2"/>
</dbReference>
<dbReference type="InterPro" id="IPR020599">
    <property type="entry name" value="Transl_elong_fac_P/YeiP"/>
</dbReference>
<dbReference type="InterPro" id="IPR013185">
    <property type="entry name" value="Transl_elong_KOW-like"/>
</dbReference>
<dbReference type="InterPro" id="IPR011897">
    <property type="entry name" value="Transl_elong_p-like_YeiP"/>
</dbReference>
<dbReference type="InterPro" id="IPR001059">
    <property type="entry name" value="Transl_elong_P/YeiP_cen"/>
</dbReference>
<dbReference type="InterPro" id="IPR013852">
    <property type="entry name" value="Transl_elong_P/YeiP_CS"/>
</dbReference>
<dbReference type="InterPro" id="IPR008991">
    <property type="entry name" value="Translation_prot_SH3-like_sf"/>
</dbReference>
<dbReference type="NCBIfam" id="NF001810">
    <property type="entry name" value="PRK00529.1"/>
    <property type="match status" value="1"/>
</dbReference>
<dbReference type="NCBIfam" id="NF003392">
    <property type="entry name" value="PRK04542.1"/>
    <property type="match status" value="1"/>
</dbReference>
<dbReference type="NCBIfam" id="TIGR02178">
    <property type="entry name" value="yeiP"/>
    <property type="match status" value="1"/>
</dbReference>
<dbReference type="PANTHER" id="PTHR30053">
    <property type="entry name" value="ELONGATION FACTOR P"/>
    <property type="match status" value="1"/>
</dbReference>
<dbReference type="PANTHER" id="PTHR30053:SF14">
    <property type="entry name" value="TRANSLATION ELONGATION FACTOR KOW-LIKE DOMAIN-CONTAINING PROTEIN"/>
    <property type="match status" value="1"/>
</dbReference>
<dbReference type="Pfam" id="PF01132">
    <property type="entry name" value="EFP"/>
    <property type="match status" value="1"/>
</dbReference>
<dbReference type="Pfam" id="PF08207">
    <property type="entry name" value="EFP_N"/>
    <property type="match status" value="1"/>
</dbReference>
<dbReference type="Pfam" id="PF09285">
    <property type="entry name" value="Elong-fact-P_C"/>
    <property type="match status" value="1"/>
</dbReference>
<dbReference type="PIRSF" id="PIRSF005901">
    <property type="entry name" value="EF-P"/>
    <property type="match status" value="1"/>
</dbReference>
<dbReference type="SMART" id="SM01185">
    <property type="entry name" value="EFP"/>
    <property type="match status" value="1"/>
</dbReference>
<dbReference type="SMART" id="SM00841">
    <property type="entry name" value="Elong-fact-P_C"/>
    <property type="match status" value="1"/>
</dbReference>
<dbReference type="SUPFAM" id="SSF50249">
    <property type="entry name" value="Nucleic acid-binding proteins"/>
    <property type="match status" value="2"/>
</dbReference>
<dbReference type="SUPFAM" id="SSF50104">
    <property type="entry name" value="Translation proteins SH3-like domain"/>
    <property type="match status" value="1"/>
</dbReference>
<dbReference type="PROSITE" id="PS01275">
    <property type="entry name" value="EFP"/>
    <property type="match status" value="1"/>
</dbReference>
<reference key="1">
    <citation type="journal article" date="2002" name="Proc. Natl. Acad. Sci. U.S.A.">
        <title>Extensive mosaic structure revealed by the complete genome sequence of uropathogenic Escherichia coli.</title>
        <authorList>
            <person name="Welch R.A."/>
            <person name="Burland V."/>
            <person name="Plunkett G. III"/>
            <person name="Redford P."/>
            <person name="Roesch P."/>
            <person name="Rasko D."/>
            <person name="Buckles E.L."/>
            <person name="Liou S.-R."/>
            <person name="Boutin A."/>
            <person name="Hackett J."/>
            <person name="Stroud D."/>
            <person name="Mayhew G.F."/>
            <person name="Rose D.J."/>
            <person name="Zhou S."/>
            <person name="Schwartz D.C."/>
            <person name="Perna N.T."/>
            <person name="Mobley H.L.T."/>
            <person name="Donnenberg M.S."/>
            <person name="Blattner F.R."/>
        </authorList>
    </citation>
    <scope>NUCLEOTIDE SEQUENCE [LARGE SCALE GENOMIC DNA]</scope>
    <source>
        <strain>CFT073 / ATCC 700928 / UPEC</strain>
    </source>
</reference>